<feature type="chain" id="PRO_0000188744" description="1,4-alpha-glucan branching enzyme GlgB">
    <location>
        <begin position="1"/>
        <end position="622"/>
    </location>
</feature>
<feature type="active site" description="Nucleophile" evidence="1">
    <location>
        <position position="300"/>
    </location>
</feature>
<feature type="active site" description="Proton donor" evidence="1">
    <location>
        <position position="351"/>
    </location>
</feature>
<proteinExistence type="inferred from homology"/>
<evidence type="ECO:0000255" key="1">
    <source>
        <dbReference type="HAMAP-Rule" id="MF_00685"/>
    </source>
</evidence>
<keyword id="KW-0119">Carbohydrate metabolism</keyword>
<keyword id="KW-0320">Glycogen biosynthesis</keyword>
<keyword id="KW-0321">Glycogen metabolism</keyword>
<keyword id="KW-0328">Glycosyltransferase</keyword>
<keyword id="KW-0808">Transferase</keyword>
<reference key="1">
    <citation type="journal article" date="2002" name="Mol. Microbiol.">
        <title>Genome sequence of Streptococcus agalactiae, a pathogen causing invasive neonatal disease.</title>
        <authorList>
            <person name="Glaser P."/>
            <person name="Rusniok C."/>
            <person name="Buchrieser C."/>
            <person name="Chevalier F."/>
            <person name="Frangeul L."/>
            <person name="Msadek T."/>
            <person name="Zouine M."/>
            <person name="Couve E."/>
            <person name="Lalioui L."/>
            <person name="Poyart C."/>
            <person name="Trieu-Cuot P."/>
            <person name="Kunst F."/>
        </authorList>
    </citation>
    <scope>NUCLEOTIDE SEQUENCE [LARGE SCALE GENOMIC DNA]</scope>
    <source>
        <strain>NEM316</strain>
    </source>
</reference>
<sequence>MSNKDELYTFGIGENFHLQNYLGVHSENESFCFRVWAPNAENVQVIGDFTDWRNRPLQMNKNQAGVWEANSLDAREGDLYKYLVTRKGGQVVEKIDPMAVYMERRPGTASVIKVLRNKKWEDGLWMGRRKRLGFQKRPINIYEVHAGSWKKDDFGHPMTFSQLKDYLIPYLVEMNYTHVEFMPLMAHPLDMSWGYQLMGYFAFEHTYGTPEEFQDFVEACHKNNIGVLVDWVPGHFIQNDDALAYFDGTATYEYQNHDRAHNYRWGALNFDLGKNQVQSFLISSALFWIEHYHIDGIRVDAVSNMLYLDYDEGPWEANQFGDNRNLEGYYFLRKLNKVIKERHPNVMMIAEESTASTPITKDLESGGLGFDFKWNMGWMNDILRFYEEDPLYRQYDFNLVTFSFMYIFNENFVLAFSHDEVVHGKKSMMHKMWGDRYNQFAGLRNLYAYQMCHPGKKLLFMGSEFGQFLEWKYNDQLEWENLNDDMNQKMQRYTKQLNQFYKDHKCLWRIDDSFDGIEIIDADNKSETVLSFIRKDDKGDLLLCVFNMTPVERPNFTIGVPQAGIYEEVLNTEMEEFGGVWKNHNPVTKTQVATWKDYDHTLSFTLPALGASVWRIKRRLRK</sequence>
<organism>
    <name type="scientific">Streptococcus agalactiae serotype III (strain NEM316)</name>
    <dbReference type="NCBI Taxonomy" id="211110"/>
    <lineage>
        <taxon>Bacteria</taxon>
        <taxon>Bacillati</taxon>
        <taxon>Bacillota</taxon>
        <taxon>Bacilli</taxon>
        <taxon>Lactobacillales</taxon>
        <taxon>Streptococcaceae</taxon>
        <taxon>Streptococcus</taxon>
    </lineage>
</organism>
<dbReference type="EC" id="2.4.1.18" evidence="1"/>
<dbReference type="EMBL" id="AL766847">
    <property type="protein sequence ID" value="CAD46515.1"/>
    <property type="molecule type" value="Genomic_DNA"/>
</dbReference>
<dbReference type="RefSeq" id="WP_000066071.1">
    <property type="nucleotide sequence ID" value="NC_004368.1"/>
</dbReference>
<dbReference type="SMR" id="Q8E5V8"/>
<dbReference type="CAZy" id="CBM48">
    <property type="family name" value="Carbohydrate-Binding Module Family 48"/>
</dbReference>
<dbReference type="CAZy" id="GH13">
    <property type="family name" value="Glycoside Hydrolase Family 13"/>
</dbReference>
<dbReference type="KEGG" id="san:gbs0871"/>
<dbReference type="eggNOG" id="COG0296">
    <property type="taxonomic scope" value="Bacteria"/>
</dbReference>
<dbReference type="HOGENOM" id="CLU_004245_3_2_9"/>
<dbReference type="UniPathway" id="UPA00164"/>
<dbReference type="Proteomes" id="UP000000823">
    <property type="component" value="Chromosome"/>
</dbReference>
<dbReference type="GO" id="GO:0005829">
    <property type="term" value="C:cytosol"/>
    <property type="evidence" value="ECO:0007669"/>
    <property type="project" value="TreeGrafter"/>
</dbReference>
<dbReference type="GO" id="GO:0003844">
    <property type="term" value="F:1,4-alpha-glucan branching enzyme activity"/>
    <property type="evidence" value="ECO:0007669"/>
    <property type="project" value="UniProtKB-UniRule"/>
</dbReference>
<dbReference type="GO" id="GO:0043169">
    <property type="term" value="F:cation binding"/>
    <property type="evidence" value="ECO:0007669"/>
    <property type="project" value="InterPro"/>
</dbReference>
<dbReference type="GO" id="GO:0004553">
    <property type="term" value="F:hydrolase activity, hydrolyzing O-glycosyl compounds"/>
    <property type="evidence" value="ECO:0007669"/>
    <property type="project" value="InterPro"/>
</dbReference>
<dbReference type="GO" id="GO:0005978">
    <property type="term" value="P:glycogen biosynthetic process"/>
    <property type="evidence" value="ECO:0007669"/>
    <property type="project" value="UniProtKB-UniRule"/>
</dbReference>
<dbReference type="CDD" id="cd11322">
    <property type="entry name" value="AmyAc_Glg_BE"/>
    <property type="match status" value="1"/>
</dbReference>
<dbReference type="CDD" id="cd02855">
    <property type="entry name" value="E_set_GBE_prok_N"/>
    <property type="match status" value="1"/>
</dbReference>
<dbReference type="FunFam" id="3.20.20.80:FF:000003">
    <property type="entry name" value="1,4-alpha-glucan branching enzyme GlgB"/>
    <property type="match status" value="1"/>
</dbReference>
<dbReference type="Gene3D" id="3.20.20.80">
    <property type="entry name" value="Glycosidases"/>
    <property type="match status" value="1"/>
</dbReference>
<dbReference type="Gene3D" id="2.60.40.1180">
    <property type="entry name" value="Golgi alpha-mannosidase II"/>
    <property type="match status" value="1"/>
</dbReference>
<dbReference type="Gene3D" id="2.60.40.10">
    <property type="entry name" value="Immunoglobulins"/>
    <property type="match status" value="1"/>
</dbReference>
<dbReference type="HAMAP" id="MF_00685">
    <property type="entry name" value="GlgB"/>
    <property type="match status" value="1"/>
</dbReference>
<dbReference type="InterPro" id="IPR006048">
    <property type="entry name" value="A-amylase/branching_C"/>
</dbReference>
<dbReference type="InterPro" id="IPR037439">
    <property type="entry name" value="Branching_enzy"/>
</dbReference>
<dbReference type="InterPro" id="IPR006407">
    <property type="entry name" value="GlgB"/>
</dbReference>
<dbReference type="InterPro" id="IPR044143">
    <property type="entry name" value="GlgB_N_E_set_prok"/>
</dbReference>
<dbReference type="InterPro" id="IPR006047">
    <property type="entry name" value="Glyco_hydro_13_cat_dom"/>
</dbReference>
<dbReference type="InterPro" id="IPR004193">
    <property type="entry name" value="Glyco_hydro_13_N"/>
</dbReference>
<dbReference type="InterPro" id="IPR013780">
    <property type="entry name" value="Glyco_hydro_b"/>
</dbReference>
<dbReference type="InterPro" id="IPR017853">
    <property type="entry name" value="Glycoside_hydrolase_SF"/>
</dbReference>
<dbReference type="InterPro" id="IPR013783">
    <property type="entry name" value="Ig-like_fold"/>
</dbReference>
<dbReference type="InterPro" id="IPR014756">
    <property type="entry name" value="Ig_E-set"/>
</dbReference>
<dbReference type="NCBIfam" id="TIGR01515">
    <property type="entry name" value="branching_enzym"/>
    <property type="match status" value="1"/>
</dbReference>
<dbReference type="NCBIfam" id="NF003811">
    <property type="entry name" value="PRK05402.1"/>
    <property type="match status" value="1"/>
</dbReference>
<dbReference type="NCBIfam" id="NF008967">
    <property type="entry name" value="PRK12313.1"/>
    <property type="match status" value="1"/>
</dbReference>
<dbReference type="PANTHER" id="PTHR43651">
    <property type="entry name" value="1,4-ALPHA-GLUCAN-BRANCHING ENZYME"/>
    <property type="match status" value="1"/>
</dbReference>
<dbReference type="PANTHER" id="PTHR43651:SF3">
    <property type="entry name" value="1,4-ALPHA-GLUCAN-BRANCHING ENZYME"/>
    <property type="match status" value="1"/>
</dbReference>
<dbReference type="Pfam" id="PF00128">
    <property type="entry name" value="Alpha-amylase"/>
    <property type="match status" value="2"/>
</dbReference>
<dbReference type="Pfam" id="PF02806">
    <property type="entry name" value="Alpha-amylase_C"/>
    <property type="match status" value="1"/>
</dbReference>
<dbReference type="Pfam" id="PF02922">
    <property type="entry name" value="CBM_48"/>
    <property type="match status" value="1"/>
</dbReference>
<dbReference type="PIRSF" id="PIRSF000463">
    <property type="entry name" value="GlgB"/>
    <property type="match status" value="1"/>
</dbReference>
<dbReference type="SMART" id="SM00642">
    <property type="entry name" value="Aamy"/>
    <property type="match status" value="1"/>
</dbReference>
<dbReference type="SUPFAM" id="SSF51445">
    <property type="entry name" value="(Trans)glycosidases"/>
    <property type="match status" value="1"/>
</dbReference>
<dbReference type="SUPFAM" id="SSF81296">
    <property type="entry name" value="E set domains"/>
    <property type="match status" value="1"/>
</dbReference>
<dbReference type="SUPFAM" id="SSF51011">
    <property type="entry name" value="Glycosyl hydrolase domain"/>
    <property type="match status" value="1"/>
</dbReference>
<accession>Q8E5V8</accession>
<protein>
    <recommendedName>
        <fullName evidence="1">1,4-alpha-glucan branching enzyme GlgB</fullName>
        <ecNumber evidence="1">2.4.1.18</ecNumber>
    </recommendedName>
    <alternativeName>
        <fullName evidence="1">1,4-alpha-D-glucan:1,4-alpha-D-glucan 6-glucosyl-transferase</fullName>
    </alternativeName>
    <alternativeName>
        <fullName evidence="1">Alpha-(1-&gt;4)-glucan branching enzyme</fullName>
    </alternativeName>
    <alternativeName>
        <fullName evidence="1">Glycogen branching enzyme</fullName>
        <shortName evidence="1">BE</shortName>
    </alternativeName>
</protein>
<gene>
    <name evidence="1" type="primary">glgB</name>
    <name type="ordered locus">gbs0871</name>
</gene>
<name>GLGB_STRA3</name>
<comment type="function">
    <text evidence="1">Catalyzes the formation of the alpha-1,6-glucosidic linkages in glycogen by scission of a 1,4-alpha-linked oligosaccharide from growing alpha-1,4-glucan chains and the subsequent attachment of the oligosaccharide to the alpha-1,6 position.</text>
</comment>
<comment type="catalytic activity">
    <reaction evidence="1">
        <text>Transfers a segment of a (1-&gt;4)-alpha-D-glucan chain to a primary hydroxy group in a similar glucan chain.</text>
        <dbReference type="EC" id="2.4.1.18"/>
    </reaction>
</comment>
<comment type="pathway">
    <text evidence="1">Glycan biosynthesis; glycogen biosynthesis.</text>
</comment>
<comment type="subunit">
    <text evidence="1">Monomer.</text>
</comment>
<comment type="similarity">
    <text evidence="1">Belongs to the glycosyl hydrolase 13 family. GlgB subfamily.</text>
</comment>